<evidence type="ECO:0000250" key="1"/>
<evidence type="ECO:0000305" key="2"/>
<evidence type="ECO:0007744" key="3">
    <source>
    </source>
</evidence>
<name>CP136_MYCTU</name>
<feature type="initiator methionine" description="Removed" evidence="3">
    <location>
        <position position="1"/>
    </location>
</feature>
<feature type="chain" id="PRO_0000052295" description="Putative cytochrome P450 136">
    <location>
        <begin position="2"/>
        <end position="492"/>
    </location>
</feature>
<feature type="binding site" description="axial binding residue" evidence="1">
    <location>
        <position position="439"/>
    </location>
    <ligand>
        <name>heme</name>
        <dbReference type="ChEBI" id="CHEBI:30413"/>
    </ligand>
    <ligandPart>
        <name>Fe</name>
        <dbReference type="ChEBI" id="CHEBI:18248"/>
    </ligandPart>
</feature>
<feature type="modified residue" description="N-acetylalanine" evidence="3">
    <location>
        <position position="2"/>
    </location>
</feature>
<proteinExistence type="evidence at protein level"/>
<gene>
    <name type="primary">cyp136</name>
    <name type="ordered locus">Rv3059</name>
    <name type="ORF">MTCY22D7.22c</name>
</gene>
<organism>
    <name type="scientific">Mycobacterium tuberculosis (strain ATCC 25618 / H37Rv)</name>
    <dbReference type="NCBI Taxonomy" id="83332"/>
    <lineage>
        <taxon>Bacteria</taxon>
        <taxon>Bacillati</taxon>
        <taxon>Actinomycetota</taxon>
        <taxon>Actinomycetes</taxon>
        <taxon>Mycobacteriales</taxon>
        <taxon>Mycobacteriaceae</taxon>
        <taxon>Mycobacterium</taxon>
        <taxon>Mycobacterium tuberculosis complex</taxon>
    </lineage>
</organism>
<comment type="cofactor">
    <cofactor evidence="1">
        <name>heme</name>
        <dbReference type="ChEBI" id="CHEBI:30413"/>
    </cofactor>
</comment>
<comment type="similarity">
    <text evidence="2">Belongs to the cytochrome P450 family.</text>
</comment>
<reference key="1">
    <citation type="journal article" date="1998" name="Nature">
        <title>Deciphering the biology of Mycobacterium tuberculosis from the complete genome sequence.</title>
        <authorList>
            <person name="Cole S.T."/>
            <person name="Brosch R."/>
            <person name="Parkhill J."/>
            <person name="Garnier T."/>
            <person name="Churcher C.M."/>
            <person name="Harris D.E."/>
            <person name="Gordon S.V."/>
            <person name="Eiglmeier K."/>
            <person name="Gas S."/>
            <person name="Barry C.E. III"/>
            <person name="Tekaia F."/>
            <person name="Badcock K."/>
            <person name="Basham D."/>
            <person name="Brown D."/>
            <person name="Chillingworth T."/>
            <person name="Connor R."/>
            <person name="Davies R.M."/>
            <person name="Devlin K."/>
            <person name="Feltwell T."/>
            <person name="Gentles S."/>
            <person name="Hamlin N."/>
            <person name="Holroyd S."/>
            <person name="Hornsby T."/>
            <person name="Jagels K."/>
            <person name="Krogh A."/>
            <person name="McLean J."/>
            <person name="Moule S."/>
            <person name="Murphy L.D."/>
            <person name="Oliver S."/>
            <person name="Osborne J."/>
            <person name="Quail M.A."/>
            <person name="Rajandream M.A."/>
            <person name="Rogers J."/>
            <person name="Rutter S."/>
            <person name="Seeger K."/>
            <person name="Skelton S."/>
            <person name="Squares S."/>
            <person name="Squares R."/>
            <person name="Sulston J.E."/>
            <person name="Taylor K."/>
            <person name="Whitehead S."/>
            <person name="Barrell B.G."/>
        </authorList>
    </citation>
    <scope>NUCLEOTIDE SEQUENCE [LARGE SCALE GENOMIC DNA]</scope>
    <source>
        <strain>ATCC 25618 / H37Rv</strain>
    </source>
</reference>
<reference key="2">
    <citation type="journal article" date="2011" name="Mol. Cell. Proteomics">
        <title>Proteogenomic analysis of Mycobacterium tuberculosis by high resolution mass spectrometry.</title>
        <authorList>
            <person name="Kelkar D.S."/>
            <person name="Kumar D."/>
            <person name="Kumar P."/>
            <person name="Balakrishnan L."/>
            <person name="Muthusamy B."/>
            <person name="Yadav A.K."/>
            <person name="Shrivastava P."/>
            <person name="Marimuthu A."/>
            <person name="Anand S."/>
            <person name="Sundaram H."/>
            <person name="Kingsbury R."/>
            <person name="Harsha H.C."/>
            <person name="Nair B."/>
            <person name="Prasad T.S."/>
            <person name="Chauhan D.S."/>
            <person name="Katoch K."/>
            <person name="Katoch V.M."/>
            <person name="Kumar P."/>
            <person name="Chaerkady R."/>
            <person name="Ramachandran S."/>
            <person name="Dash D."/>
            <person name="Pandey A."/>
        </authorList>
    </citation>
    <scope>ACETYLATION [LARGE SCALE ANALYSIS] AT ALA-2</scope>
    <scope>CLEAVAGE OF INITIATOR METHIONINE [LARGE SCALE ANALYSIS]</scope>
    <scope>IDENTIFICATION BY MASS SPECTROMETRY [LARGE SCALE ANALYSIS]</scope>
    <source>
        <strain>ATCC 25618 / H37Rv</strain>
    </source>
</reference>
<keyword id="KW-0007">Acetylation</keyword>
<keyword id="KW-0349">Heme</keyword>
<keyword id="KW-0408">Iron</keyword>
<keyword id="KW-0479">Metal-binding</keyword>
<keyword id="KW-0503">Monooxygenase</keyword>
<keyword id="KW-0560">Oxidoreductase</keyword>
<keyword id="KW-1185">Reference proteome</keyword>
<dbReference type="EC" id="1.14.-.-"/>
<dbReference type="EMBL" id="AL123456">
    <property type="protein sequence ID" value="CCP45868.1"/>
    <property type="molecule type" value="Genomic_DNA"/>
</dbReference>
<dbReference type="PIR" id="D70649">
    <property type="entry name" value="D70649"/>
</dbReference>
<dbReference type="RefSeq" id="NP_217575.1">
    <property type="nucleotide sequence ID" value="NC_000962.3"/>
</dbReference>
<dbReference type="RefSeq" id="WP_003899900.1">
    <property type="nucleotide sequence ID" value="NZ_NVQJ01000011.1"/>
</dbReference>
<dbReference type="SMR" id="P9WPM7"/>
<dbReference type="FunCoup" id="P9WPM7">
    <property type="interactions" value="17"/>
</dbReference>
<dbReference type="STRING" id="83332.Rv3059"/>
<dbReference type="iPTMnet" id="P9WPM7"/>
<dbReference type="PaxDb" id="83332-Rv3059"/>
<dbReference type="DNASU" id="888883"/>
<dbReference type="GeneID" id="888883"/>
<dbReference type="KEGG" id="mtu:Rv3059"/>
<dbReference type="KEGG" id="mtv:RVBD_3059"/>
<dbReference type="TubercuList" id="Rv3059"/>
<dbReference type="eggNOG" id="COG2124">
    <property type="taxonomic scope" value="Bacteria"/>
</dbReference>
<dbReference type="InParanoid" id="P9WPM7"/>
<dbReference type="OrthoDB" id="9764248at2"/>
<dbReference type="PhylomeDB" id="P9WPM7"/>
<dbReference type="Proteomes" id="UP000001584">
    <property type="component" value="Chromosome"/>
</dbReference>
<dbReference type="GO" id="GO:0020037">
    <property type="term" value="F:heme binding"/>
    <property type="evidence" value="ECO:0007669"/>
    <property type="project" value="InterPro"/>
</dbReference>
<dbReference type="GO" id="GO:0005506">
    <property type="term" value="F:iron ion binding"/>
    <property type="evidence" value="ECO:0007669"/>
    <property type="project" value="InterPro"/>
</dbReference>
<dbReference type="GO" id="GO:0004497">
    <property type="term" value="F:monooxygenase activity"/>
    <property type="evidence" value="ECO:0007669"/>
    <property type="project" value="UniProtKB-KW"/>
</dbReference>
<dbReference type="GO" id="GO:0016491">
    <property type="term" value="F:oxidoreductase activity"/>
    <property type="evidence" value="ECO:0000318"/>
    <property type="project" value="GO_Central"/>
</dbReference>
<dbReference type="GO" id="GO:0016705">
    <property type="term" value="F:oxidoreductase activity, acting on paired donors, with incorporation or reduction of molecular oxygen"/>
    <property type="evidence" value="ECO:0007669"/>
    <property type="project" value="InterPro"/>
</dbReference>
<dbReference type="CDD" id="cd11045">
    <property type="entry name" value="CYP136-like"/>
    <property type="match status" value="1"/>
</dbReference>
<dbReference type="Gene3D" id="1.10.630.10">
    <property type="entry name" value="Cytochrome P450"/>
    <property type="match status" value="1"/>
</dbReference>
<dbReference type="InterPro" id="IPR001128">
    <property type="entry name" value="Cyt_P450"/>
</dbReference>
<dbReference type="InterPro" id="IPR017972">
    <property type="entry name" value="Cyt_P450_CS"/>
</dbReference>
<dbReference type="InterPro" id="IPR002403">
    <property type="entry name" value="Cyt_P450_E_grp-IV"/>
</dbReference>
<dbReference type="InterPro" id="IPR036396">
    <property type="entry name" value="Cyt_P450_sf"/>
</dbReference>
<dbReference type="PANTHER" id="PTHR24286">
    <property type="entry name" value="CYTOCHROME P450 26"/>
    <property type="match status" value="1"/>
</dbReference>
<dbReference type="PANTHER" id="PTHR24286:SF24">
    <property type="entry name" value="LANOSTEROL 14-ALPHA DEMETHYLASE"/>
    <property type="match status" value="1"/>
</dbReference>
<dbReference type="Pfam" id="PF00067">
    <property type="entry name" value="p450"/>
    <property type="match status" value="1"/>
</dbReference>
<dbReference type="PRINTS" id="PR00465">
    <property type="entry name" value="EP450IV"/>
</dbReference>
<dbReference type="SUPFAM" id="SSF48264">
    <property type="entry name" value="Cytochrome P450"/>
    <property type="match status" value="1"/>
</dbReference>
<dbReference type="PROSITE" id="PS00086">
    <property type="entry name" value="CYTOCHROME_P450"/>
    <property type="match status" value="1"/>
</dbReference>
<accession>P9WPM7</accession>
<accession>L0TEE3</accession>
<accession>P95099</accession>
<sequence>MATIHPPAYLLDQAKRRFTPSFNNFPGMSLVEHMLLNTKFPEKKLAEPPPGSGLKPVVGDAGLPILGHMIEMLRGGPDYLMFLYKTKGPVVFGDSAVLPGVAALGPDAAQVIYSNRNKDYSQQGWVPVIGPFFHRGLMLLDFEEHMFHRRIMQEAFVRSRLAGYLEQMDRVVSRVVADDWVVNDARFLVYPAMKALTLDIASMVFMGHEPGTDHELVTKVNKAFTITTRAGNAVIRTSVPPFTWWRGLRARELLENYFTARVKERREASGNDLLTVLCQTEDDDGNRFSDADIVNHMIFLMMAAHDTSTSTATTMAYQLAAHPEWQQRCRDESDRHGDGPLDIESLEQLESLDLVMNESIRLVTPVQWAMRQTVRDTELLGYYLPKGTNVIAYPGMNHRLPEIWTDPLTFDPERFTEPRNEHKRHRYAFTPFGGGVHKCIGMVFDQLEIKTILHRLLRRYRLELSRPDYQPRWDYSAMPIPMDGMPIVLRPR</sequence>
<protein>
    <recommendedName>
        <fullName>Putative cytochrome P450 136</fullName>
        <ecNumber>1.14.-.-</ecNumber>
    </recommendedName>
</protein>